<keyword id="KW-0255">Endonuclease</keyword>
<keyword id="KW-0378">Hydrolase</keyword>
<keyword id="KW-0540">Nuclease</keyword>
<keyword id="KW-0694">RNA-binding</keyword>
<keyword id="KW-0819">tRNA processing</keyword>
<protein>
    <recommendedName>
        <fullName evidence="1">Ribonuclease P protein component</fullName>
        <shortName evidence="1">RNase P protein</shortName>
        <shortName evidence="1">RNaseP protein</shortName>
        <ecNumber evidence="1">3.1.26.5</ecNumber>
    </recommendedName>
    <alternativeName>
        <fullName evidence="1">Protein C5</fullName>
    </alternativeName>
</protein>
<organism>
    <name type="scientific">Chlamydia caviae (strain ATCC VR-813 / DSM 19441 / 03DC25 / GPIC)</name>
    <name type="common">Chlamydophila caviae</name>
    <dbReference type="NCBI Taxonomy" id="227941"/>
    <lineage>
        <taxon>Bacteria</taxon>
        <taxon>Pseudomonadati</taxon>
        <taxon>Chlamydiota</taxon>
        <taxon>Chlamydiia</taxon>
        <taxon>Chlamydiales</taxon>
        <taxon>Chlamydiaceae</taxon>
        <taxon>Chlamydia/Chlamydophila group</taxon>
        <taxon>Chlamydia</taxon>
    </lineage>
</organism>
<evidence type="ECO:0000255" key="1">
    <source>
        <dbReference type="HAMAP-Rule" id="MF_00227"/>
    </source>
</evidence>
<evidence type="ECO:0000256" key="2">
    <source>
        <dbReference type="SAM" id="MobiDB-lite"/>
    </source>
</evidence>
<name>RNPA_CHLCV</name>
<accession>Q821V0</accession>
<gene>
    <name evidence="1" type="primary">rnpA</name>
    <name type="ordered locus">CCA_00835</name>
</gene>
<proteinExistence type="inferred from homology"/>
<dbReference type="EC" id="3.1.26.5" evidence="1"/>
<dbReference type="EMBL" id="AE015925">
    <property type="protein sequence ID" value="AAP05576.1"/>
    <property type="molecule type" value="Genomic_DNA"/>
</dbReference>
<dbReference type="RefSeq" id="WP_011006790.1">
    <property type="nucleotide sequence ID" value="NC_003361.3"/>
</dbReference>
<dbReference type="SMR" id="Q821V0"/>
<dbReference type="STRING" id="227941.CCA_00835"/>
<dbReference type="KEGG" id="cca:CCA_00835"/>
<dbReference type="eggNOG" id="COG0594">
    <property type="taxonomic scope" value="Bacteria"/>
</dbReference>
<dbReference type="HOGENOM" id="CLU_117179_9_2_0"/>
<dbReference type="OrthoDB" id="9810867at2"/>
<dbReference type="Proteomes" id="UP000002193">
    <property type="component" value="Chromosome"/>
</dbReference>
<dbReference type="GO" id="GO:0030677">
    <property type="term" value="C:ribonuclease P complex"/>
    <property type="evidence" value="ECO:0007669"/>
    <property type="project" value="TreeGrafter"/>
</dbReference>
<dbReference type="GO" id="GO:0042781">
    <property type="term" value="F:3'-tRNA processing endoribonuclease activity"/>
    <property type="evidence" value="ECO:0007669"/>
    <property type="project" value="TreeGrafter"/>
</dbReference>
<dbReference type="GO" id="GO:0004526">
    <property type="term" value="F:ribonuclease P activity"/>
    <property type="evidence" value="ECO:0007669"/>
    <property type="project" value="UniProtKB-UniRule"/>
</dbReference>
<dbReference type="GO" id="GO:0000049">
    <property type="term" value="F:tRNA binding"/>
    <property type="evidence" value="ECO:0007669"/>
    <property type="project" value="UniProtKB-UniRule"/>
</dbReference>
<dbReference type="GO" id="GO:0001682">
    <property type="term" value="P:tRNA 5'-leader removal"/>
    <property type="evidence" value="ECO:0007669"/>
    <property type="project" value="UniProtKB-UniRule"/>
</dbReference>
<dbReference type="Gene3D" id="3.30.230.10">
    <property type="match status" value="1"/>
</dbReference>
<dbReference type="HAMAP" id="MF_00227">
    <property type="entry name" value="RNase_P"/>
    <property type="match status" value="1"/>
</dbReference>
<dbReference type="InterPro" id="IPR020568">
    <property type="entry name" value="Ribosomal_Su5_D2-typ_SF"/>
</dbReference>
<dbReference type="InterPro" id="IPR014721">
    <property type="entry name" value="Ribsml_uS5_D2-typ_fold_subgr"/>
</dbReference>
<dbReference type="InterPro" id="IPR000100">
    <property type="entry name" value="RNase_P"/>
</dbReference>
<dbReference type="InterPro" id="IPR020539">
    <property type="entry name" value="RNase_P_CS"/>
</dbReference>
<dbReference type="NCBIfam" id="TIGR00188">
    <property type="entry name" value="rnpA"/>
    <property type="match status" value="1"/>
</dbReference>
<dbReference type="PANTHER" id="PTHR33992">
    <property type="entry name" value="RIBONUCLEASE P PROTEIN COMPONENT"/>
    <property type="match status" value="1"/>
</dbReference>
<dbReference type="PANTHER" id="PTHR33992:SF1">
    <property type="entry name" value="RIBONUCLEASE P PROTEIN COMPONENT"/>
    <property type="match status" value="1"/>
</dbReference>
<dbReference type="Pfam" id="PF00825">
    <property type="entry name" value="Ribonuclease_P"/>
    <property type="match status" value="1"/>
</dbReference>
<dbReference type="SUPFAM" id="SSF54211">
    <property type="entry name" value="Ribosomal protein S5 domain 2-like"/>
    <property type="match status" value="1"/>
</dbReference>
<dbReference type="PROSITE" id="PS00648">
    <property type="entry name" value="RIBONUCLEASE_P"/>
    <property type="match status" value="1"/>
</dbReference>
<comment type="function">
    <text evidence="1">RNaseP catalyzes the removal of the 5'-leader sequence from pre-tRNA to produce the mature 5'-terminus. It can also cleave other RNA substrates such as 4.5S RNA. The protein component plays an auxiliary but essential role in vivo by binding to the 5'-leader sequence and broadening the substrate specificity of the ribozyme.</text>
</comment>
<comment type="catalytic activity">
    <reaction evidence="1">
        <text>Endonucleolytic cleavage of RNA, removing 5'-extranucleotides from tRNA precursor.</text>
        <dbReference type="EC" id="3.1.26.5"/>
    </reaction>
</comment>
<comment type="subunit">
    <text evidence="1">Consists of a catalytic RNA component (M1 or rnpB) and a protein subunit.</text>
</comment>
<comment type="similarity">
    <text evidence="1">Belongs to the RnpA family.</text>
</comment>
<feature type="chain" id="PRO_0000198444" description="Ribonuclease P protein component">
    <location>
        <begin position="1"/>
        <end position="139"/>
    </location>
</feature>
<feature type="region of interest" description="Disordered" evidence="2">
    <location>
        <begin position="120"/>
        <end position="139"/>
    </location>
</feature>
<feature type="compositionally biased region" description="Basic and acidic residues" evidence="2">
    <location>
        <begin position="129"/>
        <end position="139"/>
    </location>
</feature>
<reference key="1">
    <citation type="journal article" date="2003" name="Nucleic Acids Res.">
        <title>Genome sequence of Chlamydophila caviae (Chlamydia psittaci GPIC): examining the role of niche-specific genes in the evolution of the Chlamydiaceae.</title>
        <authorList>
            <person name="Read T.D."/>
            <person name="Myers G.S.A."/>
            <person name="Brunham R.C."/>
            <person name="Nelson W.C."/>
            <person name="Paulsen I.T."/>
            <person name="Heidelberg J.F."/>
            <person name="Holtzapple E.K."/>
            <person name="Khouri H.M."/>
            <person name="Federova N.B."/>
            <person name="Carty H.A."/>
            <person name="Umayam L.A."/>
            <person name="Haft D.H."/>
            <person name="Peterson J.D."/>
            <person name="Beanan M.J."/>
            <person name="White O."/>
            <person name="Salzberg S.L."/>
            <person name="Hsia R.-C."/>
            <person name="McClarty G."/>
            <person name="Rank R.G."/>
            <person name="Bavoil P.M."/>
            <person name="Fraser C.M."/>
        </authorList>
    </citation>
    <scope>NUCLEOTIDE SEQUENCE [LARGE SCALE GENOMIC DNA]</scope>
    <source>
        <strain>ATCC VR-813 / DSM 19441 / 03DC25 / GPIC</strain>
    </source>
</reference>
<sequence>MHRSTLPKYARVLKRKQFLYISRAGSHCQGSQVIFHVAPSRYSGCCKLGITVSKKFGKAHKRNYFKRIVREAFRKKRHSLPACQIVVMPKNKQQPKFEDLLQDFAQQIPEALSSKLAKNKPTTGVEYSPKNEKCESVLP</sequence>